<proteinExistence type="evidence at protein level"/>
<gene>
    <name type="primary">rfbD</name>
</gene>
<keyword id="KW-0002">3D-structure</keyword>
<keyword id="KW-0274">FAD</keyword>
<keyword id="KW-0285">Flavoprotein</keyword>
<keyword id="KW-0413">Isomerase</keyword>
<keyword id="KW-0448">Lipopolysaccharide biosynthesis</keyword>
<keyword id="KW-0732">Signal</keyword>
<dbReference type="EC" id="5.4.99.9"/>
<dbReference type="EMBL" id="L31762">
    <property type="protein sequence ID" value="AAC98417.1"/>
    <property type="molecule type" value="Genomic_DNA"/>
</dbReference>
<dbReference type="RefSeq" id="WP_023284018.1">
    <property type="nucleotide sequence ID" value="NZ_WUAB01000006.1"/>
</dbReference>
<dbReference type="PDB" id="1WAM">
    <property type="method" value="X-ray"/>
    <property type="resolution" value="2.35 A"/>
    <property type="chains" value="A=1-384"/>
</dbReference>
<dbReference type="PDB" id="2BI7">
    <property type="method" value="X-ray"/>
    <property type="resolution" value="2.00 A"/>
    <property type="chains" value="A=1-384"/>
</dbReference>
<dbReference type="PDB" id="2BI8">
    <property type="method" value="X-ray"/>
    <property type="resolution" value="2.35 A"/>
    <property type="chains" value="A=1-384"/>
</dbReference>
<dbReference type="PDB" id="3GF4">
    <property type="method" value="X-ray"/>
    <property type="resolution" value="2.45 A"/>
    <property type="chains" value="A/B=1-384"/>
</dbReference>
<dbReference type="PDB" id="3INR">
    <property type="method" value="X-ray"/>
    <property type="resolution" value="2.30 A"/>
    <property type="chains" value="A/B=1-383"/>
</dbReference>
<dbReference type="PDB" id="3INT">
    <property type="method" value="X-ray"/>
    <property type="resolution" value="2.51 A"/>
    <property type="chains" value="A/B=1-384"/>
</dbReference>
<dbReference type="PDB" id="3KYB">
    <property type="method" value="X-ray"/>
    <property type="resolution" value="2.30 A"/>
    <property type="chains" value="A/B=1-384"/>
</dbReference>
<dbReference type="PDBsum" id="1WAM"/>
<dbReference type="PDBsum" id="2BI7"/>
<dbReference type="PDBsum" id="2BI8"/>
<dbReference type="PDBsum" id="3GF4"/>
<dbReference type="PDBsum" id="3INR"/>
<dbReference type="PDBsum" id="3INT"/>
<dbReference type="PDBsum" id="3KYB"/>
<dbReference type="SMR" id="Q48485"/>
<dbReference type="BindingDB" id="Q48485"/>
<dbReference type="ChEMBL" id="CHEMBL5169233"/>
<dbReference type="BRENDA" id="5.4.99.9">
    <property type="organism ID" value="2814"/>
</dbReference>
<dbReference type="UniPathway" id="UPA00281"/>
<dbReference type="EvolutionaryTrace" id="Q48485"/>
<dbReference type="GO" id="GO:0005829">
    <property type="term" value="C:cytosol"/>
    <property type="evidence" value="ECO:0007669"/>
    <property type="project" value="TreeGrafter"/>
</dbReference>
<dbReference type="GO" id="GO:0050660">
    <property type="term" value="F:flavin adenine dinucleotide binding"/>
    <property type="evidence" value="ECO:0007669"/>
    <property type="project" value="TreeGrafter"/>
</dbReference>
<dbReference type="GO" id="GO:0008767">
    <property type="term" value="F:UDP-galactopyranose mutase activity"/>
    <property type="evidence" value="ECO:0007669"/>
    <property type="project" value="UniProtKB-EC"/>
</dbReference>
<dbReference type="GO" id="GO:0009243">
    <property type="term" value="P:O antigen biosynthetic process"/>
    <property type="evidence" value="ECO:0007669"/>
    <property type="project" value="UniProtKB-UniPathway"/>
</dbReference>
<dbReference type="Gene3D" id="3.40.50.720">
    <property type="entry name" value="NAD(P)-binding Rossmann-like Domain"/>
    <property type="match status" value="3"/>
</dbReference>
<dbReference type="InterPro" id="IPR004379">
    <property type="entry name" value="UDP-GALP_mutase"/>
</dbReference>
<dbReference type="InterPro" id="IPR015899">
    <property type="entry name" value="UDP-GalPyranose_mutase_C"/>
</dbReference>
<dbReference type="NCBIfam" id="TIGR00031">
    <property type="entry name" value="UDP-GALP_mutase"/>
    <property type="match status" value="1"/>
</dbReference>
<dbReference type="PANTHER" id="PTHR21197">
    <property type="entry name" value="UDP-GALACTOPYRANOSE MUTASE"/>
    <property type="match status" value="1"/>
</dbReference>
<dbReference type="PANTHER" id="PTHR21197:SF0">
    <property type="entry name" value="UDP-GALACTOPYRANOSE MUTASE"/>
    <property type="match status" value="1"/>
</dbReference>
<dbReference type="Pfam" id="PF03275">
    <property type="entry name" value="GLF"/>
    <property type="match status" value="1"/>
</dbReference>
<dbReference type="Pfam" id="PF13450">
    <property type="entry name" value="NAD_binding_8"/>
    <property type="match status" value="1"/>
</dbReference>
<dbReference type="SUPFAM" id="SSF54373">
    <property type="entry name" value="FAD-linked reductases, C-terminal domain"/>
    <property type="match status" value="1"/>
</dbReference>
<dbReference type="SUPFAM" id="SSF51971">
    <property type="entry name" value="Nucleotide-binding domain"/>
    <property type="match status" value="1"/>
</dbReference>
<comment type="function">
    <text evidence="5">Involved in the biosynthesis of the galactose-containing O-side-chain polysaccharide backbone structure of D-galactan I which is a key component of lipopolysaccharide (LPS). Catalyzes the interconversion through a 2-keto intermediate of uridine diphosphogalactopyranose (UDP-GalP) into uridine diphosphogalactofuranose (UDP-GalF) which is the biosynthetic precursor of galactofuranosyl residues.</text>
</comment>
<comment type="catalytic activity">
    <reaction evidence="5">
        <text>UDP-alpha-D-galactose = UDP-alpha-D-galactofuranose</text>
        <dbReference type="Rhea" id="RHEA:24132"/>
        <dbReference type="ChEBI" id="CHEBI:66914"/>
        <dbReference type="ChEBI" id="CHEBI:66915"/>
        <dbReference type="EC" id="5.4.99.9"/>
    </reaction>
</comment>
<comment type="cofactor">
    <cofactor evidence="2 3 4 5 6">
        <name>FAD</name>
        <dbReference type="ChEBI" id="CHEBI:57692"/>
    </cofactor>
    <text evidence="2 3 4 5 6">Binds 1 FAD per subunit.</text>
</comment>
<comment type="pathway">
    <text>Bacterial outer membrane biogenesis; LPS O-antigen biosynthesis.</text>
</comment>
<comment type="subunit">
    <text evidence="2 3 4 5 6">Homodimer.</text>
</comment>
<comment type="disruption phenotype">
    <text evidence="5">Abolishes lipopolysaccharide (LPS) biosynthesis.</text>
</comment>
<comment type="similarity">
    <text evidence="7">Belongs to the UDP-galactopyranose/dTDP-fucopyranose mutase family.</text>
</comment>
<name>GLF1_KLEPN</name>
<protein>
    <recommendedName>
        <fullName>UDP-galactopyranose mutase</fullName>
        <shortName>UGM</shortName>
        <ecNumber>5.4.99.9</ecNumber>
    </recommendedName>
    <alternativeName>
        <fullName>UDP-GALP mutase</fullName>
    </alternativeName>
    <alternativeName>
        <fullName>Uridine 5-diphosphate galactopyranose mutase</fullName>
    </alternativeName>
</protein>
<evidence type="ECO:0000255" key="1"/>
<evidence type="ECO:0000269" key="2">
    <source>
    </source>
</evidence>
<evidence type="ECO:0000269" key="3">
    <source>
    </source>
</evidence>
<evidence type="ECO:0000269" key="4">
    <source>
    </source>
</evidence>
<evidence type="ECO:0000269" key="5">
    <source>
    </source>
</evidence>
<evidence type="ECO:0000269" key="6">
    <source ref="7"/>
</evidence>
<evidence type="ECO:0000305" key="7"/>
<evidence type="ECO:0007829" key="8">
    <source>
        <dbReference type="PDB" id="2BI7"/>
    </source>
</evidence>
<feature type="signal peptide" evidence="1">
    <location>
        <begin position="1"/>
        <end position="23"/>
    </location>
</feature>
<feature type="chain" id="PRO_0000087506" description="UDP-galactopyranose mutase">
    <location>
        <begin position="24"/>
        <end position="384"/>
    </location>
</feature>
<feature type="binding site" evidence="2 3 4 6">
    <location>
        <position position="14"/>
    </location>
    <ligand>
        <name>FAD</name>
        <dbReference type="ChEBI" id="CHEBI:57692"/>
    </ligand>
</feature>
<feature type="binding site" evidence="2 3 4 6">
    <location>
        <begin position="33"/>
        <end position="34"/>
    </location>
    <ligand>
        <name>FAD</name>
        <dbReference type="ChEBI" id="CHEBI:57692"/>
    </ligand>
</feature>
<feature type="binding site" evidence="2 3 4 6">
    <location>
        <position position="41"/>
    </location>
    <ligand>
        <name>FAD</name>
        <dbReference type="ChEBI" id="CHEBI:57692"/>
    </ligand>
</feature>
<feature type="binding site" evidence="2 3 4 6">
    <location>
        <begin position="60"/>
        <end position="61"/>
    </location>
    <ligand>
        <name>FAD</name>
        <dbReference type="ChEBI" id="CHEBI:57692"/>
    </ligand>
</feature>
<feature type="binding site">
    <location>
        <position position="84"/>
    </location>
    <ligand>
        <name>UDP-alpha-D-galactose</name>
        <dbReference type="ChEBI" id="CHEBI:66914"/>
    </ligand>
</feature>
<feature type="binding site">
    <location>
        <position position="151"/>
    </location>
    <ligand>
        <name>UDP-alpha-D-galactose</name>
        <dbReference type="ChEBI" id="CHEBI:66914"/>
    </ligand>
</feature>
<feature type="binding site">
    <location>
        <position position="156"/>
    </location>
    <ligand>
        <name>UDP-alpha-D-galactose</name>
        <dbReference type="ChEBI" id="CHEBI:66914"/>
    </ligand>
</feature>
<feature type="binding site">
    <location>
        <position position="160"/>
    </location>
    <ligand>
        <name>UDP-alpha-D-galactose</name>
        <dbReference type="ChEBI" id="CHEBI:66914"/>
    </ligand>
</feature>
<feature type="binding site">
    <location>
        <position position="185"/>
    </location>
    <ligand>
        <name>UDP-alpha-D-galactose</name>
        <dbReference type="ChEBI" id="CHEBI:66914"/>
    </ligand>
</feature>
<feature type="binding site" evidence="2 3 4 6">
    <location>
        <position position="219"/>
    </location>
    <ligand>
        <name>FAD</name>
        <dbReference type="ChEBI" id="CHEBI:57692"/>
    </ligand>
</feature>
<feature type="binding site">
    <location>
        <position position="270"/>
    </location>
    <ligand>
        <name>UDP-alpha-D-galactose</name>
        <dbReference type="ChEBI" id="CHEBI:66914"/>
    </ligand>
</feature>
<feature type="binding site">
    <location>
        <position position="280"/>
    </location>
    <ligand>
        <name>UDP-alpha-D-galactose</name>
        <dbReference type="ChEBI" id="CHEBI:66914"/>
    </ligand>
</feature>
<feature type="binding site">
    <location>
        <position position="314"/>
    </location>
    <ligand>
        <name>UDP-alpha-D-galactose</name>
        <dbReference type="ChEBI" id="CHEBI:66914"/>
    </ligand>
</feature>
<feature type="binding site" evidence="2 3 4 6">
    <location>
        <position position="343"/>
    </location>
    <ligand>
        <name>FAD</name>
        <dbReference type="ChEBI" id="CHEBI:57692"/>
    </ligand>
</feature>
<feature type="binding site">
    <location>
        <position position="349"/>
    </location>
    <ligand>
        <name>UDP-alpha-D-galactose</name>
        <dbReference type="ChEBI" id="CHEBI:66914"/>
    </ligand>
</feature>
<feature type="binding site" evidence="2 3 4 6">
    <location>
        <begin position="350"/>
        <end position="355"/>
    </location>
    <ligand>
        <name>FAD</name>
        <dbReference type="ChEBI" id="CHEBI:57692"/>
    </ligand>
</feature>
<feature type="strand" evidence="8">
    <location>
        <begin position="5"/>
        <end position="9"/>
    </location>
</feature>
<feature type="helix" evidence="8">
    <location>
        <begin position="13"/>
        <end position="23"/>
    </location>
</feature>
<feature type="turn" evidence="8">
    <location>
        <begin position="24"/>
        <end position="26"/>
    </location>
</feature>
<feature type="strand" evidence="8">
    <location>
        <begin position="28"/>
        <end position="39"/>
    </location>
</feature>
<feature type="helix" evidence="8">
    <location>
        <begin position="40"/>
        <end position="42"/>
    </location>
</feature>
<feature type="strand" evidence="8">
    <location>
        <begin position="44"/>
        <end position="46"/>
    </location>
</feature>
<feature type="turn" evidence="8">
    <location>
        <begin position="48"/>
        <end position="50"/>
    </location>
</feature>
<feature type="strand" evidence="8">
    <location>
        <begin position="53"/>
        <end position="55"/>
    </location>
</feature>
<feature type="strand" evidence="8">
    <location>
        <begin position="62"/>
        <end position="65"/>
    </location>
</feature>
<feature type="helix" evidence="8">
    <location>
        <begin position="67"/>
        <end position="74"/>
    </location>
</feature>
<feature type="strand" evidence="8">
    <location>
        <begin position="79"/>
        <end position="81"/>
    </location>
</feature>
<feature type="strand" evidence="8">
    <location>
        <begin position="86"/>
        <end position="90"/>
    </location>
</feature>
<feature type="strand" evidence="8">
    <location>
        <begin position="93"/>
        <end position="98"/>
    </location>
</feature>
<feature type="helix" evidence="8">
    <location>
        <begin position="101"/>
        <end position="107"/>
    </location>
</feature>
<feature type="helix" evidence="8">
    <location>
        <begin position="114"/>
        <end position="124"/>
    </location>
</feature>
<feature type="helix" evidence="8">
    <location>
        <begin position="135"/>
        <end position="143"/>
    </location>
</feature>
<feature type="helix" evidence="8">
    <location>
        <begin position="145"/>
        <end position="151"/>
    </location>
</feature>
<feature type="helix" evidence="8">
    <location>
        <begin position="153"/>
        <end position="160"/>
    </location>
</feature>
<feature type="helix" evidence="8">
    <location>
        <begin position="164"/>
        <end position="166"/>
    </location>
</feature>
<feature type="helix" evidence="8">
    <location>
        <begin position="169"/>
        <end position="171"/>
    </location>
</feature>
<feature type="strand" evidence="8">
    <location>
        <begin position="179"/>
        <end position="181"/>
    </location>
</feature>
<feature type="strand" evidence="8">
    <location>
        <begin position="189"/>
        <end position="194"/>
    </location>
</feature>
<feature type="helix" evidence="8">
    <location>
        <begin position="197"/>
        <end position="206"/>
    </location>
</feature>
<feature type="strand" evidence="8">
    <location>
        <begin position="211"/>
        <end position="216"/>
    </location>
</feature>
<feature type="helix" evidence="8">
    <location>
        <begin position="221"/>
        <end position="226"/>
    </location>
</feature>
<feature type="strand" evidence="8">
    <location>
        <begin position="227"/>
        <end position="232"/>
    </location>
</feature>
<feature type="helix" evidence="8">
    <location>
        <begin position="236"/>
        <end position="239"/>
    </location>
</feature>
<feature type="turn" evidence="8">
    <location>
        <begin position="240"/>
        <end position="244"/>
    </location>
</feature>
<feature type="strand" evidence="8">
    <location>
        <begin position="249"/>
        <end position="261"/>
    </location>
</feature>
<feature type="strand" evidence="8">
    <location>
        <begin position="263"/>
        <end position="271"/>
    </location>
</feature>
<feature type="strand" evidence="8">
    <location>
        <begin position="276"/>
        <end position="283"/>
    </location>
</feature>
<feature type="helix" evidence="8">
    <location>
        <begin position="284"/>
        <end position="287"/>
    </location>
</feature>
<feature type="strand" evidence="8">
    <location>
        <begin position="294"/>
        <end position="305"/>
    </location>
</feature>
<feature type="helix" evidence="8">
    <location>
        <begin position="319"/>
        <end position="332"/>
    </location>
</feature>
<feature type="strand" evidence="8">
    <location>
        <begin position="336"/>
        <end position="340"/>
    </location>
</feature>
<feature type="helix" evidence="8">
    <location>
        <begin position="342"/>
        <end position="345"/>
    </location>
</feature>
<feature type="helix" evidence="8">
    <location>
        <begin position="352"/>
        <end position="371"/>
    </location>
</feature>
<organism>
    <name type="scientific">Klebsiella pneumoniae</name>
    <dbReference type="NCBI Taxonomy" id="573"/>
    <lineage>
        <taxon>Bacteria</taxon>
        <taxon>Pseudomonadati</taxon>
        <taxon>Pseudomonadota</taxon>
        <taxon>Gammaproteobacteria</taxon>
        <taxon>Enterobacterales</taxon>
        <taxon>Enterobacteriaceae</taxon>
        <taxon>Klebsiella/Raoultella group</taxon>
        <taxon>Klebsiella</taxon>
        <taxon>Klebsiella pneumoniae complex</taxon>
    </lineage>
</organism>
<reference key="1">
    <citation type="journal article" date="1995" name="J. Bacteriol.">
        <title>Role of Rfe and RfbF in the initiation of biosynthesis of D-galactan I, the lipopolysaccharide O antigen from Klebsiella pneumoniae serotype O1.</title>
        <authorList>
            <person name="Clarke B.R."/>
            <person name="Bronner D."/>
            <person name="Keenleyside W.J."/>
            <person name="Severn W.B."/>
            <person name="Richards J.C."/>
            <person name="Whitfield C."/>
        </authorList>
    </citation>
    <scope>NUCLEOTIDE SEQUENCE [GENOMIC DNA]</scope>
    <source>
        <strain>K20 / Serotype O1</strain>
    </source>
</reference>
<reference key="2">
    <citation type="journal article" date="1997" name="J. Biol. Chem.">
        <title>UDP-galactofuranose precursor required for formation of the lipopolysaccharide O antigen of Klebsiella pneumoniae serotype O1 is synthesized by the product of the rfbDKPO1 gene.</title>
        <authorList>
            <person name="Koplin R."/>
            <person name="Brisson J.R."/>
            <person name="Whitfield C."/>
        </authorList>
    </citation>
    <scope>FUNCTION</scope>
    <scope>CATALYTIC ACTIVITY</scope>
    <scope>DISRUPTION PHENOTYPE</scope>
    <scope>COFACTOR</scope>
    <scope>SUBUNIT</scope>
    <source>
        <strain>K20 / Serotype O1</strain>
    </source>
</reference>
<reference key="3">
    <citation type="journal article" date="2004" name="Nat. Struct. Mol. Biol.">
        <title>A unique catalytic mechanism for UDP-galactopyranose mutase.</title>
        <authorList>
            <person name="Soltero-Higgin M."/>
            <person name="Carlson E.E."/>
            <person name="Gruber T.D."/>
            <person name="Kiessling L.L."/>
        </authorList>
    </citation>
    <scope>REACTION MECHANISM</scope>
    <source>
        <strain>K20 / Serotype O1</strain>
    </source>
</reference>
<reference key="4">
    <citation type="journal article" date="2005" name="J. Mol. Biol.">
        <title>Crystal structures of Mycobacteria tuberculosis and Klebsiella pneumoniae UDP-galactopyranose mutase in the oxidised state and Klebsiella pneumoniae UDP-galactopyranose mutase in the (active) reduced state.</title>
        <authorList>
            <person name="Beis K."/>
            <person name="Srikannathasan V."/>
            <person name="Liu H."/>
            <person name="Fullerton S.W."/>
            <person name="Bamford V.A."/>
            <person name="Sanders D.A."/>
            <person name="Whitfield C."/>
            <person name="McNeil M.R."/>
            <person name="Naismith J.H."/>
        </authorList>
    </citation>
    <scope>X-RAY CRYSTALLOGRAPHY (2.35 ANGSTROMS) IN COMPLEX WITH FAD</scope>
    <scope>COFACTOR</scope>
    <scope>SUBUNIT</scope>
</reference>
<reference key="5">
    <citation type="journal article" date="2009" name="Biochemistry">
        <title>X-ray crystallography reveals a reduced substrate complex of UDP-galactopyranose mutase poised for covalent catalysis by flavin.</title>
        <authorList>
            <person name="Gruber T.D."/>
            <person name="Westler W.M."/>
            <person name="Kiessling L.L."/>
            <person name="Forest K.T."/>
        </authorList>
    </citation>
    <scope>X-RAY CRYSTALLOGRAPHY (2.3 ANGSTROMS) OF 1-383 IN COMPLEX WITH FAD AND SUBSTRATE</scope>
    <scope>COFACTOR</scope>
    <scope>SUBUNIT</scope>
</reference>
<reference key="6">
    <citation type="journal article" date="2009" name="J. Mol. Biol.">
        <title>Ligand binding and substrate discrimination by UDP-galactopyranose mutase.</title>
        <authorList>
            <person name="Gruber T.D."/>
            <person name="Borrok M.J."/>
            <person name="Westler W.M."/>
            <person name="Forest K.T."/>
            <person name="Kiessling L.L."/>
        </authorList>
    </citation>
    <scope>X-RAY CRYSTALLOGRAPHY (2.45 ANGSTROMS) OF 1-383 IN COMPLEX WITH FAD AND SUBSTRATE</scope>
    <scope>COFACTOR</scope>
</reference>
<reference key="7">
    <citation type="submission" date="2009-12" db="PDB data bank">
        <title>Structure of UDP-galactopyranose mutase bound to flavin mononucleotide.</title>
        <authorList>
            <person name="Gruber T.D."/>
            <person name="Dimond M.C."/>
            <person name="Kiessling L.L."/>
            <person name="Forest K.T."/>
        </authorList>
    </citation>
    <scope>X-RAY CRYSTALLOGRAPHY (2.30 ANGSTROMS) OF 1-383 IN COMPLEX WITH FAD</scope>
    <scope>COFACTOR</scope>
    <scope>SUBUNIT</scope>
</reference>
<sequence length="384" mass="44457">MKSKKILIVGAGFSGAVIGRQLAEKGHQVHIIDQRDHIGGNSYDARDSETNVMVHVYGPHIFHTDNETVWNYVNKHAEMMPYVNRVKATVNGQVFSLPINLHTINQFFSKTCSPDEARALIAEKGDSTIADPQTFEEQALRFIGKELYEAFFKGYTIKQWGMQPSELPASILKRLPVRFNYDDNYFNHKFQGMPKCGYTQMIKSILNHENIKVDLQREFIVEERTHYDHVFYSGPLDAFYGYQYGRLGYRTLDFKKFTYQGDYQGCAVMNYCSVDVPYTRITEHKYFSPWEQHDGSVCYKEYSRACEENDIPYYPIRQMGEMALLEKYLSLAENETNITFVGRLGTYRYLDMDVTIAEALKTAEVYLNSLTENQPMPVFTVSVR</sequence>
<accession>Q48485</accession>